<accession>Q56310</accession>
<comment type="function">
    <text evidence="1">Involved in the transmission of sensory signals from the chemoreceptors to the flagellar motors. CheA is autophosphorylated; it can transfer its phosphate group to either CheB or CheY (By similarity).</text>
</comment>
<comment type="catalytic activity">
    <reaction>
        <text>ATP + protein L-histidine = ADP + protein N-phospho-L-histidine.</text>
        <dbReference type="EC" id="2.7.13.3"/>
    </reaction>
</comment>
<comment type="interaction">
    <interactant intactId="EBI-1039701">
        <id>Q56310</id>
    </interactant>
    <interactant intactId="EBI-15580256">
        <id>Q56311</id>
        <label>cheW</label>
    </interactant>
    <organismsDiffer>false</organismsDiffer>
    <experiments>3</experiments>
</comment>
<comment type="subcellular location">
    <subcellularLocation>
        <location evidence="6">Cytoplasm</location>
    </subcellularLocation>
</comment>
<proteinExistence type="evidence at protein level"/>
<reference key="1">
    <citation type="journal article" date="1996" name="J. Bacteriol.">
        <title>Thermostable chemotaxis proteins from the hyperthermophilic bacterium Thermotoga maritima.</title>
        <authorList>
            <person name="Swanson R.V."/>
            <person name="Sanna M.G."/>
            <person name="Simon M.I."/>
        </authorList>
    </citation>
    <scope>NUCLEOTIDE SEQUENCE [GENOMIC DNA]</scope>
</reference>
<reference key="2">
    <citation type="journal article" date="1999" name="Nature">
        <title>Evidence for lateral gene transfer between Archaea and Bacteria from genome sequence of Thermotoga maritima.</title>
        <authorList>
            <person name="Nelson K.E."/>
            <person name="Clayton R.A."/>
            <person name="Gill S.R."/>
            <person name="Gwinn M.L."/>
            <person name="Dodson R.J."/>
            <person name="Haft D.H."/>
            <person name="Hickey E.K."/>
            <person name="Peterson J.D."/>
            <person name="Nelson W.C."/>
            <person name="Ketchum K.A."/>
            <person name="McDonald L.A."/>
            <person name="Utterback T.R."/>
            <person name="Malek J.A."/>
            <person name="Linher K.D."/>
            <person name="Garrett M.M."/>
            <person name="Stewart A.M."/>
            <person name="Cotton M.D."/>
            <person name="Pratt M.S."/>
            <person name="Phillips C.A."/>
            <person name="Richardson D.L."/>
            <person name="Heidelberg J.F."/>
            <person name="Sutton G.G."/>
            <person name="Fleischmann R.D."/>
            <person name="Eisen J.A."/>
            <person name="White O."/>
            <person name="Salzberg S.L."/>
            <person name="Smith H.O."/>
            <person name="Venter J.C."/>
            <person name="Fraser C.M."/>
        </authorList>
    </citation>
    <scope>NUCLEOTIDE SEQUENCE [LARGE SCALE GENOMIC DNA]</scope>
    <source>
        <strain>ATCC 43589 / DSM 3109 / JCM 10099 / NBRC 100826 / MSB8</strain>
    </source>
</reference>
<reference key="3">
    <citation type="journal article" date="1999" name="Cell">
        <title>Structure of CheA, a signal-transducing histidine kinase.</title>
        <authorList>
            <person name="Bilwes A.M."/>
            <person name="Alex L.A."/>
            <person name="Crane B.R."/>
            <person name="Simon M.I."/>
        </authorList>
    </citation>
    <scope>X-RAY CRYSTALLOGRAPHY (2.6 ANGSTROMS) OF 293-671</scope>
</reference>
<name>CHEA_THEMA</name>
<evidence type="ECO:0000250" key="1"/>
<evidence type="ECO:0000255" key="2">
    <source>
        <dbReference type="PROSITE-ProRule" id="PRU00052"/>
    </source>
</evidence>
<evidence type="ECO:0000255" key="3">
    <source>
        <dbReference type="PROSITE-ProRule" id="PRU00107"/>
    </source>
</evidence>
<evidence type="ECO:0000255" key="4">
    <source>
        <dbReference type="PROSITE-ProRule" id="PRU00110"/>
    </source>
</evidence>
<evidence type="ECO:0000256" key="5">
    <source>
        <dbReference type="SAM" id="MobiDB-lite"/>
    </source>
</evidence>
<evidence type="ECO:0000305" key="6"/>
<evidence type="ECO:0007829" key="7">
    <source>
        <dbReference type="PDB" id="1B3Q"/>
    </source>
</evidence>
<evidence type="ECO:0007829" key="8">
    <source>
        <dbReference type="PDB" id="1I58"/>
    </source>
</evidence>
<evidence type="ECO:0007829" key="9">
    <source>
        <dbReference type="PDB" id="1TQG"/>
    </source>
</evidence>
<evidence type="ECO:0007829" key="10">
    <source>
        <dbReference type="PDB" id="1U0S"/>
    </source>
</evidence>
<evidence type="ECO:0007829" key="11">
    <source>
        <dbReference type="PDB" id="2CH4"/>
    </source>
</evidence>
<evidence type="ECO:0007829" key="12">
    <source>
        <dbReference type="PDB" id="2LD6"/>
    </source>
</evidence>
<evidence type="ECO:0007829" key="13">
    <source>
        <dbReference type="PDB" id="4JPB"/>
    </source>
</evidence>
<evidence type="ECO:0007829" key="14">
    <source>
        <dbReference type="PDB" id="4XIV"/>
    </source>
</evidence>
<gene>
    <name type="primary">cheA</name>
    <name type="ordered locus">TM_0702</name>
</gene>
<feature type="chain" id="PRO_0000074718" description="Chemotaxis protein CheA">
    <location>
        <begin position="1"/>
        <end position="671"/>
    </location>
</feature>
<feature type="domain" description="HPt" evidence="4">
    <location>
        <begin position="1"/>
        <end position="102"/>
    </location>
</feature>
<feature type="domain" description="Histidine kinase" evidence="3">
    <location>
        <begin position="291"/>
        <end position="541"/>
    </location>
</feature>
<feature type="domain" description="CheW-like" evidence="2">
    <location>
        <begin position="543"/>
        <end position="671"/>
    </location>
</feature>
<feature type="region of interest" description="Disordered" evidence="5">
    <location>
        <begin position="125"/>
        <end position="155"/>
    </location>
</feature>
<feature type="region of interest" description="Disordered" evidence="5">
    <location>
        <begin position="267"/>
        <end position="286"/>
    </location>
</feature>
<feature type="compositionally biased region" description="Basic and acidic residues" evidence="5">
    <location>
        <begin position="128"/>
        <end position="150"/>
    </location>
</feature>
<feature type="compositionally biased region" description="Basic and acidic residues" evidence="5">
    <location>
        <begin position="268"/>
        <end position="286"/>
    </location>
</feature>
<feature type="modified residue" description="Phosphohistidine; by autocatalysis" evidence="3">
    <location>
        <position position="45"/>
    </location>
</feature>
<feature type="sequence conflict" description="In Ref. 1; AAA96387." evidence="6" ref="1">
    <original>D</original>
    <variation>G</variation>
    <location>
        <position position="304"/>
    </location>
</feature>
<feature type="helix" evidence="9">
    <location>
        <begin position="4"/>
        <end position="29"/>
    </location>
</feature>
<feature type="helix" evidence="9">
    <location>
        <begin position="34"/>
        <end position="53"/>
    </location>
</feature>
<feature type="helix" evidence="9">
    <location>
        <begin position="57"/>
        <end position="74"/>
    </location>
</feature>
<feature type="helix" evidence="9">
    <location>
        <begin position="82"/>
        <end position="102"/>
    </location>
</feature>
<feature type="helix" evidence="12">
    <location>
        <begin position="114"/>
        <end position="123"/>
    </location>
</feature>
<feature type="strand" evidence="10">
    <location>
        <begin position="177"/>
        <end position="184"/>
    </location>
</feature>
<feature type="helix" evidence="10">
    <location>
        <begin position="192"/>
        <end position="205"/>
    </location>
</feature>
<feature type="strand" evidence="10">
    <location>
        <begin position="209"/>
        <end position="215"/>
    </location>
</feature>
<feature type="helix" evidence="10">
    <location>
        <begin position="217"/>
        <end position="221"/>
    </location>
</feature>
<feature type="strand" evidence="10">
    <location>
        <begin position="225"/>
        <end position="237"/>
    </location>
</feature>
<feature type="helix" evidence="10">
    <location>
        <begin position="239"/>
        <end position="247"/>
    </location>
</feature>
<feature type="strand" evidence="10">
    <location>
        <begin position="249"/>
        <end position="251"/>
    </location>
</feature>
<feature type="strand" evidence="10">
    <location>
        <begin position="253"/>
        <end position="260"/>
    </location>
</feature>
<feature type="strand" evidence="7">
    <location>
        <begin position="295"/>
        <end position="299"/>
    </location>
</feature>
<feature type="helix" evidence="7">
    <location>
        <begin position="300"/>
        <end position="322"/>
    </location>
</feature>
<feature type="helix" evidence="14">
    <location>
        <begin position="324"/>
        <end position="326"/>
    </location>
</feature>
<feature type="strand" evidence="8">
    <location>
        <begin position="354"/>
        <end position="357"/>
    </location>
</feature>
<feature type="helix" evidence="8">
    <location>
        <begin position="359"/>
        <end position="362"/>
    </location>
</feature>
<feature type="helix" evidence="8">
    <location>
        <begin position="365"/>
        <end position="375"/>
    </location>
</feature>
<feature type="strand" evidence="8">
    <location>
        <begin position="380"/>
        <end position="385"/>
    </location>
</feature>
<feature type="strand" evidence="8">
    <location>
        <begin position="390"/>
        <end position="392"/>
    </location>
</feature>
<feature type="helix" evidence="8">
    <location>
        <begin position="393"/>
        <end position="413"/>
    </location>
</feature>
<feature type="helix" evidence="8">
    <location>
        <begin position="418"/>
        <end position="424"/>
    </location>
</feature>
<feature type="strand" evidence="8">
    <location>
        <begin position="428"/>
        <end position="439"/>
    </location>
</feature>
<feature type="strand" evidence="8">
    <location>
        <begin position="442"/>
        <end position="449"/>
    </location>
</feature>
<feature type="helix" evidence="8">
    <location>
        <begin position="456"/>
        <end position="465"/>
    </location>
</feature>
<feature type="strand" evidence="7">
    <location>
        <begin position="466"/>
        <end position="468"/>
    </location>
</feature>
<feature type="helix" evidence="8">
    <location>
        <begin position="471"/>
        <end position="474"/>
    </location>
</feature>
<feature type="helix" evidence="8">
    <location>
        <begin position="479"/>
        <end position="483"/>
    </location>
</feature>
<feature type="helix" evidence="8">
    <location>
        <begin position="484"/>
        <end position="487"/>
    </location>
</feature>
<feature type="turn" evidence="11">
    <location>
        <begin position="489"/>
        <end position="492"/>
    </location>
</feature>
<feature type="helix" evidence="8">
    <location>
        <begin position="493"/>
        <end position="498"/>
    </location>
</feature>
<feature type="helix" evidence="8">
    <location>
        <begin position="499"/>
        <end position="501"/>
    </location>
</feature>
<feature type="helix" evidence="8">
    <location>
        <begin position="506"/>
        <end position="516"/>
    </location>
</feature>
<feature type="strand" evidence="8">
    <location>
        <begin position="520"/>
        <end position="526"/>
    </location>
</feature>
<feature type="turn" evidence="8">
    <location>
        <begin position="527"/>
        <end position="529"/>
    </location>
</feature>
<feature type="strand" evidence="8">
    <location>
        <begin position="530"/>
        <end position="538"/>
    </location>
</feature>
<feature type="strand" evidence="7">
    <location>
        <begin position="542"/>
        <end position="551"/>
    </location>
</feature>
<feature type="strand" evidence="7">
    <location>
        <begin position="554"/>
        <end position="559"/>
    </location>
</feature>
<feature type="helix" evidence="7">
    <location>
        <begin position="560"/>
        <end position="562"/>
    </location>
</feature>
<feature type="strand" evidence="7">
    <location>
        <begin position="563"/>
        <end position="567"/>
    </location>
</feature>
<feature type="helix" evidence="13">
    <location>
        <begin position="571"/>
        <end position="573"/>
    </location>
</feature>
<feature type="strand" evidence="7">
    <location>
        <begin position="575"/>
        <end position="577"/>
    </location>
</feature>
<feature type="strand" evidence="7">
    <location>
        <begin position="580"/>
        <end position="585"/>
    </location>
</feature>
<feature type="strand" evidence="7">
    <location>
        <begin position="588"/>
        <end position="594"/>
    </location>
</feature>
<feature type="helix" evidence="7">
    <location>
        <begin position="595"/>
        <end position="598"/>
    </location>
</feature>
<feature type="strand" evidence="7">
    <location>
        <begin position="611"/>
        <end position="617"/>
    </location>
</feature>
<feature type="strand" evidence="7">
    <location>
        <begin position="620"/>
        <end position="637"/>
    </location>
</feature>
<feature type="helix" evidence="7">
    <location>
        <begin position="641"/>
        <end position="644"/>
    </location>
</feature>
<feature type="strand" evidence="7">
    <location>
        <begin position="648"/>
        <end position="655"/>
    </location>
</feature>
<feature type="strand" evidence="7">
    <location>
        <begin position="657"/>
        <end position="659"/>
    </location>
</feature>
<feature type="strand" evidence="7">
    <location>
        <begin position="661"/>
        <end position="665"/>
    </location>
</feature>
<feature type="helix" evidence="7">
    <location>
        <begin position="667"/>
        <end position="669"/>
    </location>
</feature>
<keyword id="KW-0002">3D-structure</keyword>
<keyword id="KW-0067">ATP-binding</keyword>
<keyword id="KW-0145">Chemotaxis</keyword>
<keyword id="KW-0963">Cytoplasm</keyword>
<keyword id="KW-0418">Kinase</keyword>
<keyword id="KW-0547">Nucleotide-binding</keyword>
<keyword id="KW-0597">Phosphoprotein</keyword>
<keyword id="KW-1185">Reference proteome</keyword>
<keyword id="KW-0808">Transferase</keyword>
<keyword id="KW-0902">Two-component regulatory system</keyword>
<organism>
    <name type="scientific">Thermotoga maritima (strain ATCC 43589 / DSM 3109 / JCM 10099 / NBRC 100826 / MSB8)</name>
    <dbReference type="NCBI Taxonomy" id="243274"/>
    <lineage>
        <taxon>Bacteria</taxon>
        <taxon>Thermotogati</taxon>
        <taxon>Thermotogota</taxon>
        <taxon>Thermotogae</taxon>
        <taxon>Thermotogales</taxon>
        <taxon>Thermotogaceae</taxon>
        <taxon>Thermotoga</taxon>
    </lineage>
</organism>
<protein>
    <recommendedName>
        <fullName>Chemotaxis protein CheA</fullName>
        <ecNumber>2.7.13.3</ecNumber>
    </recommendedName>
</protein>
<dbReference type="EC" id="2.7.13.3"/>
<dbReference type="EMBL" id="U30501">
    <property type="protein sequence ID" value="AAA96387.1"/>
    <property type="molecule type" value="Genomic_DNA"/>
</dbReference>
<dbReference type="EMBL" id="AE000512">
    <property type="protein sequence ID" value="AAD35784.1"/>
    <property type="molecule type" value="Genomic_DNA"/>
</dbReference>
<dbReference type="PIR" id="D72346">
    <property type="entry name" value="D72346"/>
</dbReference>
<dbReference type="RefSeq" id="NP_228511.1">
    <property type="nucleotide sequence ID" value="NC_000853.1"/>
</dbReference>
<dbReference type="RefSeq" id="WP_004081040.1">
    <property type="nucleotide sequence ID" value="NZ_CP011107.1"/>
</dbReference>
<dbReference type="PDB" id="1B3Q">
    <property type="method" value="X-ray"/>
    <property type="resolution" value="2.60 A"/>
    <property type="chains" value="A/B=293-671"/>
</dbReference>
<dbReference type="PDB" id="1I58">
    <property type="method" value="X-ray"/>
    <property type="resolution" value="1.60 A"/>
    <property type="chains" value="A/B=352-540"/>
</dbReference>
<dbReference type="PDB" id="1I59">
    <property type="method" value="X-ray"/>
    <property type="resolution" value="1.80 A"/>
    <property type="chains" value="A/B=352-540"/>
</dbReference>
<dbReference type="PDB" id="1I5A">
    <property type="method" value="X-ray"/>
    <property type="resolution" value="1.90 A"/>
    <property type="chains" value="A/B=352-540"/>
</dbReference>
<dbReference type="PDB" id="1I5B">
    <property type="method" value="X-ray"/>
    <property type="resolution" value="1.94 A"/>
    <property type="chains" value="A/B=352-540"/>
</dbReference>
<dbReference type="PDB" id="1I5C">
    <property type="method" value="X-ray"/>
    <property type="resolution" value="1.90 A"/>
    <property type="chains" value="A/B=352-540"/>
</dbReference>
<dbReference type="PDB" id="1I5D">
    <property type="method" value="X-ray"/>
    <property type="resolution" value="2.90 A"/>
    <property type="chains" value="A=350-540"/>
</dbReference>
<dbReference type="PDB" id="1TQG">
    <property type="method" value="X-ray"/>
    <property type="resolution" value="0.98 A"/>
    <property type="chains" value="A=4-104"/>
</dbReference>
<dbReference type="PDB" id="1U0S">
    <property type="method" value="X-ray"/>
    <property type="resolution" value="1.90 A"/>
    <property type="chains" value="A=175-260"/>
</dbReference>
<dbReference type="PDB" id="2CH4">
    <property type="method" value="X-ray"/>
    <property type="resolution" value="3.50 A"/>
    <property type="chains" value="A/B=355-671"/>
</dbReference>
<dbReference type="PDB" id="2LD6">
    <property type="method" value="NMR"/>
    <property type="chains" value="A=1-131"/>
</dbReference>
<dbReference type="PDB" id="3JA6">
    <property type="method" value="EM"/>
    <property type="resolution" value="12.70 A"/>
    <property type="chains" value="C/E=293-671"/>
</dbReference>
<dbReference type="PDB" id="3UR1">
    <property type="method" value="X-ray"/>
    <property type="resolution" value="4.50 A"/>
    <property type="chains" value="A=355-671"/>
</dbReference>
<dbReference type="PDB" id="4JPB">
    <property type="method" value="X-ray"/>
    <property type="resolution" value="3.19 A"/>
    <property type="chains" value="A=355-671"/>
</dbReference>
<dbReference type="PDB" id="4XIV">
    <property type="method" value="X-ray"/>
    <property type="resolution" value="3.00 A"/>
    <property type="chains" value="A/B=289-540"/>
</dbReference>
<dbReference type="PDB" id="6MI6">
    <property type="method" value="X-ray"/>
    <property type="resolution" value="2.95 A"/>
    <property type="chains" value="A/B/C/D=353-539"/>
</dbReference>
<dbReference type="PDB" id="8OYQ">
    <property type="method" value="X-ray"/>
    <property type="resolution" value="1.80 A"/>
    <property type="chains" value="A/B=355-540"/>
</dbReference>
<dbReference type="PDB" id="8OYZ">
    <property type="method" value="X-ray"/>
    <property type="resolution" value="1.85 A"/>
    <property type="chains" value="A/B=355-540"/>
</dbReference>
<dbReference type="PDB" id="8OZ9">
    <property type="method" value="X-ray"/>
    <property type="resolution" value="1.40 A"/>
    <property type="chains" value="A/B=355-540"/>
</dbReference>
<dbReference type="PDB" id="8P3N">
    <property type="method" value="X-ray"/>
    <property type="resolution" value="2.00 A"/>
    <property type="chains" value="A/B=355-540"/>
</dbReference>
<dbReference type="PDB" id="8P3R">
    <property type="method" value="X-ray"/>
    <property type="resolution" value="1.90 A"/>
    <property type="chains" value="A/B=355-540"/>
</dbReference>
<dbReference type="PDB" id="8P59">
    <property type="method" value="X-ray"/>
    <property type="resolution" value="1.80 A"/>
    <property type="chains" value="A/B=355-540"/>
</dbReference>
<dbReference type="PDB" id="8PF2">
    <property type="method" value="X-ray"/>
    <property type="resolution" value="2.10 A"/>
    <property type="chains" value="A/B=355-540"/>
</dbReference>
<dbReference type="PDBsum" id="1B3Q"/>
<dbReference type="PDBsum" id="1I58"/>
<dbReference type="PDBsum" id="1I59"/>
<dbReference type="PDBsum" id="1I5A"/>
<dbReference type="PDBsum" id="1I5B"/>
<dbReference type="PDBsum" id="1I5C"/>
<dbReference type="PDBsum" id="1I5D"/>
<dbReference type="PDBsum" id="1TQG"/>
<dbReference type="PDBsum" id="1U0S"/>
<dbReference type="PDBsum" id="2CH4"/>
<dbReference type="PDBsum" id="2LD6"/>
<dbReference type="PDBsum" id="3JA6"/>
<dbReference type="PDBsum" id="3UR1"/>
<dbReference type="PDBsum" id="4JPB"/>
<dbReference type="PDBsum" id="4XIV"/>
<dbReference type="PDBsum" id="6MI6"/>
<dbReference type="PDBsum" id="8OYQ"/>
<dbReference type="PDBsum" id="8OYZ"/>
<dbReference type="PDBsum" id="8OZ9"/>
<dbReference type="PDBsum" id="8P3N"/>
<dbReference type="PDBsum" id="8P3R"/>
<dbReference type="PDBsum" id="8P59"/>
<dbReference type="PDBsum" id="8PF2"/>
<dbReference type="BMRB" id="Q56310"/>
<dbReference type="SMR" id="Q56310"/>
<dbReference type="DIP" id="DIP-29071N"/>
<dbReference type="FunCoup" id="Q56310">
    <property type="interactions" value="153"/>
</dbReference>
<dbReference type="IntAct" id="Q56310">
    <property type="interactions" value="3"/>
</dbReference>
<dbReference type="STRING" id="243274.TM_0702"/>
<dbReference type="DrugBank" id="DB02524">
    <property type="generic name" value="2',3'-O-{4-[Hydroxy(oxido)-Lambda5-azanylidene]-2,6-dinitro-2,5-cyclohexadiene-1,1-diyl}adenosine 5'-(tetrahydrogen triphosphate)"/>
</dbReference>
<dbReference type="DrugBank" id="DB03909">
    <property type="generic name" value="Adenosine-5'-[Beta, Gamma-Methylene]Triphosphate"/>
</dbReference>
<dbReference type="DrugBank" id="DB04395">
    <property type="generic name" value="Phosphoaminophosphonic Acid-Adenylate Ester"/>
</dbReference>
<dbReference type="PaxDb" id="243274-THEMA_01155"/>
<dbReference type="DNASU" id="898369"/>
<dbReference type="EnsemblBacteria" id="AAD35784">
    <property type="protein sequence ID" value="AAD35784"/>
    <property type="gene ID" value="TM_0702"/>
</dbReference>
<dbReference type="KEGG" id="tma:TM0702"/>
<dbReference type="KEGG" id="tmi:THEMA_01155"/>
<dbReference type="KEGG" id="tmm:Tmari_0702"/>
<dbReference type="KEGG" id="tmw:THMA_0717"/>
<dbReference type="eggNOG" id="COG0643">
    <property type="taxonomic scope" value="Bacteria"/>
</dbReference>
<dbReference type="eggNOG" id="COG2198">
    <property type="taxonomic scope" value="Bacteria"/>
</dbReference>
<dbReference type="InParanoid" id="Q56310"/>
<dbReference type="OrthoDB" id="9803176at2"/>
<dbReference type="BRENDA" id="2.7.13.3">
    <property type="organism ID" value="6331"/>
</dbReference>
<dbReference type="EvolutionaryTrace" id="Q56310"/>
<dbReference type="Proteomes" id="UP000008183">
    <property type="component" value="Chromosome"/>
</dbReference>
<dbReference type="GO" id="GO:0005737">
    <property type="term" value="C:cytoplasm"/>
    <property type="evidence" value="ECO:0007669"/>
    <property type="project" value="UniProtKB-SubCell"/>
</dbReference>
<dbReference type="GO" id="GO:0005524">
    <property type="term" value="F:ATP binding"/>
    <property type="evidence" value="ECO:0007669"/>
    <property type="project" value="UniProtKB-KW"/>
</dbReference>
<dbReference type="GO" id="GO:0000155">
    <property type="term" value="F:phosphorelay sensor kinase activity"/>
    <property type="evidence" value="ECO:0007669"/>
    <property type="project" value="InterPro"/>
</dbReference>
<dbReference type="GO" id="GO:0019904">
    <property type="term" value="F:protein domain specific binding"/>
    <property type="evidence" value="ECO:0000353"/>
    <property type="project" value="CAFA"/>
</dbReference>
<dbReference type="GO" id="GO:0006935">
    <property type="term" value="P:chemotaxis"/>
    <property type="evidence" value="ECO:0007669"/>
    <property type="project" value="UniProtKB-KW"/>
</dbReference>
<dbReference type="CDD" id="cd00731">
    <property type="entry name" value="CheA_reg"/>
    <property type="match status" value="1"/>
</dbReference>
<dbReference type="CDD" id="cd16916">
    <property type="entry name" value="HATPase_CheA-like"/>
    <property type="match status" value="1"/>
</dbReference>
<dbReference type="CDD" id="cd00088">
    <property type="entry name" value="HPT"/>
    <property type="match status" value="1"/>
</dbReference>
<dbReference type="FunFam" id="2.30.30.40:FF:000048">
    <property type="entry name" value="Chemotaxis protein CheA, putative"/>
    <property type="match status" value="1"/>
</dbReference>
<dbReference type="FunFam" id="3.30.565.10:FF:000016">
    <property type="entry name" value="Chemotaxis protein CheA, putative"/>
    <property type="match status" value="1"/>
</dbReference>
<dbReference type="Gene3D" id="1.10.287.560">
    <property type="entry name" value="Histidine kinase CheA-like, homodimeric domain"/>
    <property type="match status" value="1"/>
</dbReference>
<dbReference type="Gene3D" id="3.30.70.1110">
    <property type="entry name" value="Histidine kinase CheA-like, P2 response regulator-binding domain"/>
    <property type="match status" value="1"/>
</dbReference>
<dbReference type="Gene3D" id="3.30.565.10">
    <property type="entry name" value="Histidine kinase-like ATPase, C-terminal domain"/>
    <property type="match status" value="1"/>
</dbReference>
<dbReference type="Gene3D" id="1.20.120.160">
    <property type="entry name" value="HPT domain"/>
    <property type="match status" value="1"/>
</dbReference>
<dbReference type="Gene3D" id="2.30.30.40">
    <property type="entry name" value="SH3 Domains"/>
    <property type="match status" value="1"/>
</dbReference>
<dbReference type="InterPro" id="IPR051315">
    <property type="entry name" value="Bact_Chemotaxis_CheA"/>
</dbReference>
<dbReference type="InterPro" id="IPR004105">
    <property type="entry name" value="CheA-like_dim"/>
</dbReference>
<dbReference type="InterPro" id="IPR037006">
    <property type="entry name" value="CheA-like_homodim_sf"/>
</dbReference>
<dbReference type="InterPro" id="IPR037052">
    <property type="entry name" value="CheA-like_P2_sf"/>
</dbReference>
<dbReference type="InterPro" id="IPR010808">
    <property type="entry name" value="CheA_P2-bd"/>
</dbReference>
<dbReference type="InterPro" id="IPR036061">
    <property type="entry name" value="CheW-like_dom_sf"/>
</dbReference>
<dbReference type="InterPro" id="IPR002545">
    <property type="entry name" value="CheW-lke_dom"/>
</dbReference>
<dbReference type="InterPro" id="IPR035891">
    <property type="entry name" value="CheY-binding_CheA"/>
</dbReference>
<dbReference type="InterPro" id="IPR036890">
    <property type="entry name" value="HATPase_C_sf"/>
</dbReference>
<dbReference type="InterPro" id="IPR005467">
    <property type="entry name" value="His_kinase_dom"/>
</dbReference>
<dbReference type="InterPro" id="IPR036097">
    <property type="entry name" value="HisK_dim/P_sf"/>
</dbReference>
<dbReference type="InterPro" id="IPR036641">
    <property type="entry name" value="HPT_dom_sf"/>
</dbReference>
<dbReference type="InterPro" id="IPR004358">
    <property type="entry name" value="Sig_transdc_His_kin-like_C"/>
</dbReference>
<dbReference type="InterPro" id="IPR008207">
    <property type="entry name" value="Sig_transdc_His_kin_Hpt_dom"/>
</dbReference>
<dbReference type="PANTHER" id="PTHR43395:SF1">
    <property type="entry name" value="CHEMOTAXIS PROTEIN CHEA"/>
    <property type="match status" value="1"/>
</dbReference>
<dbReference type="PANTHER" id="PTHR43395">
    <property type="entry name" value="SENSOR HISTIDINE KINASE CHEA"/>
    <property type="match status" value="1"/>
</dbReference>
<dbReference type="Pfam" id="PF01584">
    <property type="entry name" value="CheW"/>
    <property type="match status" value="1"/>
</dbReference>
<dbReference type="Pfam" id="PF02895">
    <property type="entry name" value="H-kinase_dim"/>
    <property type="match status" value="1"/>
</dbReference>
<dbReference type="Pfam" id="PF02518">
    <property type="entry name" value="HATPase_c"/>
    <property type="match status" value="1"/>
</dbReference>
<dbReference type="Pfam" id="PF01627">
    <property type="entry name" value="Hpt"/>
    <property type="match status" value="1"/>
</dbReference>
<dbReference type="Pfam" id="PF07194">
    <property type="entry name" value="P2"/>
    <property type="match status" value="1"/>
</dbReference>
<dbReference type="PRINTS" id="PR00344">
    <property type="entry name" value="BCTRLSENSOR"/>
</dbReference>
<dbReference type="SMART" id="SM00260">
    <property type="entry name" value="CheW"/>
    <property type="match status" value="1"/>
</dbReference>
<dbReference type="SMART" id="SM01231">
    <property type="entry name" value="H-kinase_dim"/>
    <property type="match status" value="1"/>
</dbReference>
<dbReference type="SMART" id="SM00387">
    <property type="entry name" value="HATPase_c"/>
    <property type="match status" value="1"/>
</dbReference>
<dbReference type="SMART" id="SM00073">
    <property type="entry name" value="HPT"/>
    <property type="match status" value="1"/>
</dbReference>
<dbReference type="SUPFAM" id="SSF55874">
    <property type="entry name" value="ATPase domain of HSP90 chaperone/DNA topoisomerase II/histidine kinase"/>
    <property type="match status" value="1"/>
</dbReference>
<dbReference type="SUPFAM" id="SSF50341">
    <property type="entry name" value="CheW-like"/>
    <property type="match status" value="1"/>
</dbReference>
<dbReference type="SUPFAM" id="SSF55052">
    <property type="entry name" value="CheY-binding domain of CheA"/>
    <property type="match status" value="1"/>
</dbReference>
<dbReference type="SUPFAM" id="SSF47226">
    <property type="entry name" value="Histidine-containing phosphotransfer domain, HPT domain"/>
    <property type="match status" value="1"/>
</dbReference>
<dbReference type="SUPFAM" id="SSF47384">
    <property type="entry name" value="Homodimeric domain of signal transducing histidine kinase"/>
    <property type="match status" value="1"/>
</dbReference>
<dbReference type="PROSITE" id="PS50851">
    <property type="entry name" value="CHEW"/>
    <property type="match status" value="1"/>
</dbReference>
<dbReference type="PROSITE" id="PS50109">
    <property type="entry name" value="HIS_KIN"/>
    <property type="match status" value="1"/>
</dbReference>
<dbReference type="PROSITE" id="PS50894">
    <property type="entry name" value="HPT"/>
    <property type="match status" value="1"/>
</dbReference>
<sequence>MMEEYLGVFVDETKEYLQNLNDTLLELEKNPEDMELINEAFRALHTLKGMAGTMGFSSMAKLCHTLENILDKARNSEIKITSDLLDKIFAGVDMITRMVDKIVSEGSDDIGENIDVFSDTIKSFASSGKEKPSEIKNETETKGEEEHKGESTSNEEVVVLPEEVAHVLQEARNKGFKTFYIKVILKEGTQLKSARIYLVFHKLEELKCEVVRTIPSVEEIEEEKFENEVELFVISPVDLEKLSEALSSIADIERVIIKEVTAVTEESGAEKRTEKEEKTEKTEEKAERKKVISQTVRVDIEKLDNLMDLMGELVIARSRILETLKKYNIKELDESLSHLSRITLDLQNVVMKIRMVPISFVFNRFPRMVRDLAKKMNKEVNFIMRGEDTELDRTFVEEIGEPLLHLLRNAIDHGIEPKEERIAKGKPPIGTLILSARHEGNNVVIEVEDDGRGIDKEKIIRKAIEKGLIDESKAATLSDQEILNFLFVPGFSTKEKVSEVSGRGVGMDVVKNVVESLNGSISIESEKDKGTKVTIRLPLTLAIIQALLVKVNNLVYAIPIANIDTILSISKEDIQRVQDRDVIVIRGEVIPVYRLWEVLQIEHKEELEEMEAVIVRVGNRKYGIVVDDLLGQDDIVIKSLGKVFSEVKEFSGAAILGDGSIALIINVSGIV</sequence>